<sequence length="316" mass="34382">MIQRRTVGIVGTGNVGTAAAYAMFNQSLASEILLLDQDTRRAEGEAMDLMHGQQLVGGITCRAVEYAALSNAQIIVLSAGASQQSPDETRLGLLQRNAEIFREIIIQLDKHAPNAILVVATNPVDVLTYICQELSSRPNRRILGTGTLLDTARFRALLGRHYGVDPRSVHAYILGEHGDSEVPIWSNATIGGQKIRGETVLGKEWEEEAMQSIFEQARDAAYEIIDRKGHTDTAIGLVIARIVRAVLEDQQNVLPVSTRPDGAYGIDDVCLSVPCVVGLEGMEKRVDPGLSDEEREALRDSARALRDSRADLTVGT</sequence>
<protein>
    <recommendedName>
        <fullName evidence="1">L-lactate dehydrogenase</fullName>
        <shortName evidence="1">L-LDH</shortName>
        <ecNumber evidence="1">1.1.1.27</ecNumber>
    </recommendedName>
</protein>
<feature type="chain" id="PRO_0000237556" description="L-lactate dehydrogenase">
    <location>
        <begin position="1"/>
        <end position="316"/>
    </location>
</feature>
<feature type="region of interest" description="Disordered" evidence="2">
    <location>
        <begin position="287"/>
        <end position="316"/>
    </location>
</feature>
<feature type="compositionally biased region" description="Basic and acidic residues" evidence="2">
    <location>
        <begin position="296"/>
        <end position="310"/>
    </location>
</feature>
<feature type="active site" description="Proton acceptor" evidence="1">
    <location>
        <position position="177"/>
    </location>
</feature>
<feature type="binding site" evidence="1">
    <location>
        <position position="15"/>
    </location>
    <ligand>
        <name>NAD(+)</name>
        <dbReference type="ChEBI" id="CHEBI:57540"/>
    </ligand>
</feature>
<feature type="binding site" evidence="1">
    <location>
        <position position="36"/>
    </location>
    <ligand>
        <name>NAD(+)</name>
        <dbReference type="ChEBI" id="CHEBI:57540"/>
    </ligand>
</feature>
<feature type="binding site" evidence="1">
    <location>
        <position position="41"/>
    </location>
    <ligand>
        <name>NAD(+)</name>
        <dbReference type="ChEBI" id="CHEBI:57540"/>
    </ligand>
</feature>
<feature type="binding site" evidence="1">
    <location>
        <position position="66"/>
    </location>
    <ligand>
        <name>NAD(+)</name>
        <dbReference type="ChEBI" id="CHEBI:57540"/>
    </ligand>
</feature>
<feature type="binding site" evidence="1">
    <location>
        <begin position="80"/>
        <end position="81"/>
    </location>
    <ligand>
        <name>NAD(+)</name>
        <dbReference type="ChEBI" id="CHEBI:57540"/>
    </ligand>
</feature>
<feature type="binding site" evidence="1">
    <location>
        <position position="83"/>
    </location>
    <ligand>
        <name>substrate</name>
    </ligand>
</feature>
<feature type="binding site" evidence="1">
    <location>
        <position position="90"/>
    </location>
    <ligand>
        <name>substrate</name>
    </ligand>
</feature>
<feature type="binding site" evidence="1">
    <location>
        <begin position="120"/>
        <end position="122"/>
    </location>
    <ligand>
        <name>NAD(+)</name>
        <dbReference type="ChEBI" id="CHEBI:57540"/>
    </ligand>
</feature>
<feature type="binding site" evidence="1">
    <location>
        <begin position="122"/>
        <end position="125"/>
    </location>
    <ligand>
        <name>substrate</name>
    </ligand>
</feature>
<feature type="binding site" evidence="1">
    <location>
        <position position="145"/>
    </location>
    <ligand>
        <name>NAD(+)</name>
        <dbReference type="ChEBI" id="CHEBI:57540"/>
    </ligand>
</feature>
<feature type="binding site" evidence="1">
    <location>
        <begin position="150"/>
        <end position="153"/>
    </location>
    <ligand>
        <name>substrate</name>
    </ligand>
</feature>
<feature type="binding site" evidence="1">
    <location>
        <position position="155"/>
    </location>
    <ligand>
        <name>beta-D-fructose 1,6-bisphosphate</name>
        <dbReference type="ChEBI" id="CHEBI:32966"/>
        <note>allosteric activator</note>
    </ligand>
</feature>
<feature type="binding site" evidence="1">
    <location>
        <position position="170"/>
    </location>
    <ligand>
        <name>beta-D-fructose 1,6-bisphosphate</name>
        <dbReference type="ChEBI" id="CHEBI:32966"/>
        <note>allosteric activator</note>
    </ligand>
</feature>
<feature type="binding site" evidence="1">
    <location>
        <position position="231"/>
    </location>
    <ligand>
        <name>substrate</name>
    </ligand>
</feature>
<feature type="modified residue" description="Phosphotyrosine" evidence="1">
    <location>
        <position position="222"/>
    </location>
</feature>
<name>LDH_SALRD</name>
<comment type="function">
    <text evidence="1">Catalyzes the conversion of lactate to pyruvate.</text>
</comment>
<comment type="catalytic activity">
    <reaction evidence="1">
        <text>(S)-lactate + NAD(+) = pyruvate + NADH + H(+)</text>
        <dbReference type="Rhea" id="RHEA:23444"/>
        <dbReference type="ChEBI" id="CHEBI:15361"/>
        <dbReference type="ChEBI" id="CHEBI:15378"/>
        <dbReference type="ChEBI" id="CHEBI:16651"/>
        <dbReference type="ChEBI" id="CHEBI:57540"/>
        <dbReference type="ChEBI" id="CHEBI:57945"/>
        <dbReference type="EC" id="1.1.1.27"/>
    </reaction>
</comment>
<comment type="activity regulation">
    <text evidence="1">Allosterically activated by fructose 1,6-bisphosphate (FBP).</text>
</comment>
<comment type="pathway">
    <text evidence="1">Fermentation; pyruvate fermentation to lactate; (S)-lactate from pyruvate: step 1/1.</text>
</comment>
<comment type="subunit">
    <text evidence="1">Homotetramer.</text>
</comment>
<comment type="subcellular location">
    <subcellularLocation>
        <location evidence="1">Cytoplasm</location>
    </subcellularLocation>
</comment>
<comment type="similarity">
    <text evidence="1">Belongs to the LDH/MDH superfamily. LDH family.</text>
</comment>
<keyword id="KW-0021">Allosteric enzyme</keyword>
<keyword id="KW-0963">Cytoplasm</keyword>
<keyword id="KW-0520">NAD</keyword>
<keyword id="KW-0560">Oxidoreductase</keyword>
<keyword id="KW-0597">Phosphoprotein</keyword>
<keyword id="KW-1185">Reference proteome</keyword>
<accession>Q2S4R2</accession>
<evidence type="ECO:0000255" key="1">
    <source>
        <dbReference type="HAMAP-Rule" id="MF_00488"/>
    </source>
</evidence>
<evidence type="ECO:0000256" key="2">
    <source>
        <dbReference type="SAM" id="MobiDB-lite"/>
    </source>
</evidence>
<organism>
    <name type="scientific">Salinibacter ruber (strain DSM 13855 / M31)</name>
    <dbReference type="NCBI Taxonomy" id="309807"/>
    <lineage>
        <taxon>Bacteria</taxon>
        <taxon>Pseudomonadati</taxon>
        <taxon>Rhodothermota</taxon>
        <taxon>Rhodothermia</taxon>
        <taxon>Rhodothermales</taxon>
        <taxon>Salinibacteraceae</taxon>
        <taxon>Salinibacter</taxon>
    </lineage>
</organism>
<reference key="1">
    <citation type="journal article" date="2005" name="Proc. Natl. Acad. Sci. U.S.A.">
        <title>The genome of Salinibacter ruber: convergence and gene exchange among hyperhalophilic bacteria and archaea.</title>
        <authorList>
            <person name="Mongodin E.F."/>
            <person name="Nelson K.E."/>
            <person name="Daugherty S."/>
            <person name="DeBoy R.T."/>
            <person name="Wister J."/>
            <person name="Khouri H."/>
            <person name="Weidman J."/>
            <person name="Walsh D.A."/>
            <person name="Papke R.T."/>
            <person name="Sanchez Perez G."/>
            <person name="Sharma A.K."/>
            <person name="Nesbo C.L."/>
            <person name="MacLeod D."/>
            <person name="Bapteste E."/>
            <person name="Doolittle W.F."/>
            <person name="Charlebois R.L."/>
            <person name="Legault B."/>
            <person name="Rodriguez-Valera F."/>
        </authorList>
    </citation>
    <scope>NUCLEOTIDE SEQUENCE [LARGE SCALE GENOMIC DNA]</scope>
    <source>
        <strain>DSM 13855 / CECT 5946 / M31</strain>
    </source>
</reference>
<proteinExistence type="inferred from homology"/>
<dbReference type="EC" id="1.1.1.27" evidence="1"/>
<dbReference type="EMBL" id="CP000159">
    <property type="protein sequence ID" value="ABC46260.1"/>
    <property type="molecule type" value="Genomic_DNA"/>
</dbReference>
<dbReference type="RefSeq" id="WP_011403452.1">
    <property type="nucleotide sequence ID" value="NC_007677.1"/>
</dbReference>
<dbReference type="RefSeq" id="YP_444819.1">
    <property type="nucleotide sequence ID" value="NC_007677.1"/>
</dbReference>
<dbReference type="SMR" id="Q2S4R2"/>
<dbReference type="STRING" id="309807.SRU_0681"/>
<dbReference type="EnsemblBacteria" id="ABC46260">
    <property type="protein sequence ID" value="ABC46260"/>
    <property type="gene ID" value="SRU_0681"/>
</dbReference>
<dbReference type="KEGG" id="sru:SRU_0681"/>
<dbReference type="PATRIC" id="fig|309807.25.peg.700"/>
<dbReference type="eggNOG" id="COG0039">
    <property type="taxonomic scope" value="Bacteria"/>
</dbReference>
<dbReference type="HOGENOM" id="CLU_045401_1_1_10"/>
<dbReference type="OrthoDB" id="9802969at2"/>
<dbReference type="UniPathway" id="UPA00554">
    <property type="reaction ID" value="UER00611"/>
</dbReference>
<dbReference type="Proteomes" id="UP000008674">
    <property type="component" value="Chromosome"/>
</dbReference>
<dbReference type="GO" id="GO:0005737">
    <property type="term" value="C:cytoplasm"/>
    <property type="evidence" value="ECO:0007669"/>
    <property type="project" value="UniProtKB-SubCell"/>
</dbReference>
<dbReference type="GO" id="GO:0004459">
    <property type="term" value="F:L-lactate dehydrogenase activity"/>
    <property type="evidence" value="ECO:0007669"/>
    <property type="project" value="UniProtKB-UniRule"/>
</dbReference>
<dbReference type="GO" id="GO:0006096">
    <property type="term" value="P:glycolytic process"/>
    <property type="evidence" value="ECO:0007669"/>
    <property type="project" value="UniProtKB-UniRule"/>
</dbReference>
<dbReference type="GO" id="GO:0006089">
    <property type="term" value="P:lactate metabolic process"/>
    <property type="evidence" value="ECO:0007669"/>
    <property type="project" value="TreeGrafter"/>
</dbReference>
<dbReference type="CDD" id="cd05292">
    <property type="entry name" value="LDH_2"/>
    <property type="match status" value="1"/>
</dbReference>
<dbReference type="Gene3D" id="3.90.110.10">
    <property type="entry name" value="Lactate dehydrogenase/glycoside hydrolase, family 4, C-terminal"/>
    <property type="match status" value="1"/>
</dbReference>
<dbReference type="Gene3D" id="3.40.50.720">
    <property type="entry name" value="NAD(P)-binding Rossmann-like Domain"/>
    <property type="match status" value="1"/>
</dbReference>
<dbReference type="HAMAP" id="MF_00488">
    <property type="entry name" value="Lactate_dehydrog"/>
    <property type="match status" value="1"/>
</dbReference>
<dbReference type="InterPro" id="IPR001557">
    <property type="entry name" value="L-lactate/malate_DH"/>
</dbReference>
<dbReference type="InterPro" id="IPR011304">
    <property type="entry name" value="L-lactate_DH"/>
</dbReference>
<dbReference type="InterPro" id="IPR018177">
    <property type="entry name" value="L-lactate_DH_AS"/>
</dbReference>
<dbReference type="InterPro" id="IPR022383">
    <property type="entry name" value="Lactate/malate_DH_C"/>
</dbReference>
<dbReference type="InterPro" id="IPR001236">
    <property type="entry name" value="Lactate/malate_DH_N"/>
</dbReference>
<dbReference type="InterPro" id="IPR015955">
    <property type="entry name" value="Lactate_DH/Glyco_Ohase_4_C"/>
</dbReference>
<dbReference type="InterPro" id="IPR036291">
    <property type="entry name" value="NAD(P)-bd_dom_sf"/>
</dbReference>
<dbReference type="NCBIfam" id="TIGR01771">
    <property type="entry name" value="L-LDH-NAD"/>
    <property type="match status" value="1"/>
</dbReference>
<dbReference type="PANTHER" id="PTHR43128">
    <property type="entry name" value="L-2-HYDROXYCARBOXYLATE DEHYDROGENASE (NAD(P)(+))"/>
    <property type="match status" value="1"/>
</dbReference>
<dbReference type="PANTHER" id="PTHR43128:SF16">
    <property type="entry name" value="L-LACTATE DEHYDROGENASE"/>
    <property type="match status" value="1"/>
</dbReference>
<dbReference type="Pfam" id="PF02866">
    <property type="entry name" value="Ldh_1_C"/>
    <property type="match status" value="1"/>
</dbReference>
<dbReference type="Pfam" id="PF00056">
    <property type="entry name" value="Ldh_1_N"/>
    <property type="match status" value="1"/>
</dbReference>
<dbReference type="PIRSF" id="PIRSF000102">
    <property type="entry name" value="Lac_mal_DH"/>
    <property type="match status" value="1"/>
</dbReference>
<dbReference type="PRINTS" id="PR00086">
    <property type="entry name" value="LLDHDRGNASE"/>
</dbReference>
<dbReference type="SUPFAM" id="SSF56327">
    <property type="entry name" value="LDH C-terminal domain-like"/>
    <property type="match status" value="1"/>
</dbReference>
<dbReference type="SUPFAM" id="SSF51735">
    <property type="entry name" value="NAD(P)-binding Rossmann-fold domains"/>
    <property type="match status" value="1"/>
</dbReference>
<dbReference type="PROSITE" id="PS00064">
    <property type="entry name" value="L_LDH"/>
    <property type="match status" value="1"/>
</dbReference>
<gene>
    <name evidence="1" type="primary">ldh</name>
    <name type="ordered locus">SRU_0681</name>
</gene>